<evidence type="ECO:0000255" key="1">
    <source>
        <dbReference type="HAMAP-Rule" id="MF_00747"/>
    </source>
</evidence>
<organism>
    <name type="scientific">Rhodopseudomonas palustris (strain TIE-1)</name>
    <dbReference type="NCBI Taxonomy" id="395960"/>
    <lineage>
        <taxon>Bacteria</taxon>
        <taxon>Pseudomonadati</taxon>
        <taxon>Pseudomonadota</taxon>
        <taxon>Alphaproteobacteria</taxon>
        <taxon>Hyphomicrobiales</taxon>
        <taxon>Nitrobacteraceae</taxon>
        <taxon>Rhodopseudomonas</taxon>
    </lineage>
</organism>
<gene>
    <name evidence="1" type="primary">aceK</name>
    <name type="ordered locus">Rpal_0350</name>
</gene>
<protein>
    <recommendedName>
        <fullName evidence="1">Isocitrate dehydrogenase kinase/phosphatase</fullName>
        <shortName evidence="1">IDH kinase/phosphatase</shortName>
        <shortName evidence="1">IDHK/P</shortName>
        <ecNumber evidence="1">2.7.11.5</ecNumber>
        <ecNumber evidence="1">3.1.3.-</ecNumber>
    </recommendedName>
</protein>
<keyword id="KW-0067">ATP-binding</keyword>
<keyword id="KW-0963">Cytoplasm</keyword>
<keyword id="KW-0329">Glyoxylate bypass</keyword>
<keyword id="KW-0378">Hydrolase</keyword>
<keyword id="KW-0418">Kinase</keyword>
<keyword id="KW-0547">Nucleotide-binding</keyword>
<keyword id="KW-0904">Protein phosphatase</keyword>
<keyword id="KW-0723">Serine/threonine-protein kinase</keyword>
<keyword id="KW-0808">Transferase</keyword>
<keyword id="KW-0816">Tricarboxylic acid cycle</keyword>
<proteinExistence type="inferred from homology"/>
<name>ACEK_RHOPT</name>
<dbReference type="EC" id="2.7.11.5" evidence="1"/>
<dbReference type="EC" id="3.1.3.-" evidence="1"/>
<dbReference type="EMBL" id="CP001096">
    <property type="protein sequence ID" value="ACE98910.1"/>
    <property type="molecule type" value="Genomic_DNA"/>
</dbReference>
<dbReference type="RefSeq" id="WP_012494084.1">
    <property type="nucleotide sequence ID" value="NC_011004.1"/>
</dbReference>
<dbReference type="SMR" id="B3Q986"/>
<dbReference type="KEGG" id="rpt:Rpal_0350"/>
<dbReference type="HOGENOM" id="CLU_033804_1_1_5"/>
<dbReference type="OrthoDB" id="5287793at2"/>
<dbReference type="Proteomes" id="UP000001725">
    <property type="component" value="Chromosome"/>
</dbReference>
<dbReference type="GO" id="GO:0005737">
    <property type="term" value="C:cytoplasm"/>
    <property type="evidence" value="ECO:0007669"/>
    <property type="project" value="UniProtKB-SubCell"/>
</dbReference>
<dbReference type="GO" id="GO:0008772">
    <property type="term" value="F:[isocitrate dehydrogenase (NADP+)] kinase activity"/>
    <property type="evidence" value="ECO:0007669"/>
    <property type="project" value="UniProtKB-UniRule"/>
</dbReference>
<dbReference type="GO" id="GO:0016208">
    <property type="term" value="F:AMP binding"/>
    <property type="evidence" value="ECO:0007669"/>
    <property type="project" value="TreeGrafter"/>
</dbReference>
<dbReference type="GO" id="GO:0005524">
    <property type="term" value="F:ATP binding"/>
    <property type="evidence" value="ECO:0007669"/>
    <property type="project" value="UniProtKB-UniRule"/>
</dbReference>
<dbReference type="GO" id="GO:0004721">
    <property type="term" value="F:phosphoprotein phosphatase activity"/>
    <property type="evidence" value="ECO:0007669"/>
    <property type="project" value="UniProtKB-KW"/>
</dbReference>
<dbReference type="GO" id="GO:0004674">
    <property type="term" value="F:protein serine/threonine kinase activity"/>
    <property type="evidence" value="ECO:0007669"/>
    <property type="project" value="UniProtKB-KW"/>
</dbReference>
<dbReference type="GO" id="GO:0006006">
    <property type="term" value="P:glucose metabolic process"/>
    <property type="evidence" value="ECO:0007669"/>
    <property type="project" value="InterPro"/>
</dbReference>
<dbReference type="GO" id="GO:0006097">
    <property type="term" value="P:glyoxylate cycle"/>
    <property type="evidence" value="ECO:0007669"/>
    <property type="project" value="UniProtKB-UniRule"/>
</dbReference>
<dbReference type="GO" id="GO:0006099">
    <property type="term" value="P:tricarboxylic acid cycle"/>
    <property type="evidence" value="ECO:0007669"/>
    <property type="project" value="UniProtKB-UniRule"/>
</dbReference>
<dbReference type="HAMAP" id="MF_00747">
    <property type="entry name" value="AceK"/>
    <property type="match status" value="1"/>
</dbReference>
<dbReference type="InterPro" id="IPR046855">
    <property type="entry name" value="AceK_kinase"/>
</dbReference>
<dbReference type="InterPro" id="IPR046854">
    <property type="entry name" value="AceK_regulatory"/>
</dbReference>
<dbReference type="InterPro" id="IPR010452">
    <property type="entry name" value="Isocitrate_DH_AceK"/>
</dbReference>
<dbReference type="NCBIfam" id="NF002804">
    <property type="entry name" value="PRK02946.1"/>
    <property type="match status" value="1"/>
</dbReference>
<dbReference type="PANTHER" id="PTHR39559">
    <property type="match status" value="1"/>
</dbReference>
<dbReference type="PANTHER" id="PTHR39559:SF1">
    <property type="entry name" value="ISOCITRATE DEHYDROGENASE KINASE_PHOSPHATASE"/>
    <property type="match status" value="1"/>
</dbReference>
<dbReference type="Pfam" id="PF06315">
    <property type="entry name" value="AceK_kinase"/>
    <property type="match status" value="1"/>
</dbReference>
<dbReference type="Pfam" id="PF20423">
    <property type="entry name" value="AceK_regulatory"/>
    <property type="match status" value="1"/>
</dbReference>
<dbReference type="PIRSF" id="PIRSF000719">
    <property type="entry name" value="AceK"/>
    <property type="match status" value="1"/>
</dbReference>
<comment type="function">
    <text evidence="1">Bifunctional enzyme which can phosphorylate or dephosphorylate isocitrate dehydrogenase (IDH) on a specific serine residue. This is a regulatory mechanism which enables bacteria to bypass the Krebs cycle via the glyoxylate shunt in response to the source of carbon. When bacteria are grown on glucose, IDH is fully active and unphosphorylated, but when grown on acetate or ethanol, the activity of IDH declines drastically concomitant with its phosphorylation.</text>
</comment>
<comment type="catalytic activity">
    <reaction evidence="1">
        <text>L-seryl-[isocitrate dehydrogenase] + ATP = O-phospho-L-seryl-[isocitrate dehydrogenase] + ADP + H(+)</text>
        <dbReference type="Rhea" id="RHEA:43540"/>
        <dbReference type="Rhea" id="RHEA-COMP:10605"/>
        <dbReference type="Rhea" id="RHEA-COMP:10606"/>
        <dbReference type="ChEBI" id="CHEBI:15378"/>
        <dbReference type="ChEBI" id="CHEBI:29999"/>
        <dbReference type="ChEBI" id="CHEBI:30616"/>
        <dbReference type="ChEBI" id="CHEBI:83421"/>
        <dbReference type="ChEBI" id="CHEBI:456216"/>
        <dbReference type="EC" id="2.7.11.5"/>
    </reaction>
</comment>
<comment type="subcellular location">
    <subcellularLocation>
        <location evidence="1">Cytoplasm</location>
    </subcellularLocation>
</comment>
<comment type="similarity">
    <text evidence="1">Belongs to the AceK family.</text>
</comment>
<accession>B3Q986</accession>
<reference key="1">
    <citation type="submission" date="2008-05" db="EMBL/GenBank/DDBJ databases">
        <title>Complete sequence of Rhodopseudomonas palustris TIE-1.</title>
        <authorList>
            <consortium name="US DOE Joint Genome Institute"/>
            <person name="Lucas S."/>
            <person name="Copeland A."/>
            <person name="Lapidus A."/>
            <person name="Glavina del Rio T."/>
            <person name="Dalin E."/>
            <person name="Tice H."/>
            <person name="Pitluck S."/>
            <person name="Chain P."/>
            <person name="Malfatti S."/>
            <person name="Shin M."/>
            <person name="Vergez L."/>
            <person name="Lang D."/>
            <person name="Schmutz J."/>
            <person name="Larimer F."/>
            <person name="Land M."/>
            <person name="Hauser L."/>
            <person name="Kyrpides N."/>
            <person name="Mikhailova N."/>
            <person name="Emerson D."/>
            <person name="Newman D.K."/>
            <person name="Roden E."/>
            <person name="Richardson P."/>
        </authorList>
    </citation>
    <scope>NUCLEOTIDE SEQUENCE [LARGE SCALE GENOMIC DNA]</scope>
    <source>
        <strain>TIE-1</strain>
    </source>
</reference>
<sequence>MTATASHTRARPLGASEIEHATRIAEPDFDLLDALYRTDDPDDQARLLARVVLSAFDNYYAVSRRIPALAQAAFEARDWPVTVRLSKIRIGLYTACIDQLVPLLKAGLPELTTDEQLWPTAEAELLAAIEGRYEADFAFAFWQSLRRKLVSDEWRPVSYDAGSTARRTTSPAAVLKTTTTTLPITAEVIAGILGDAGFRVPWRDRDGDAALAAQAIETALEPLSPRPGEPVKIEIADAGFFRNRGACLVGRIQLRDRGDMPMRNLPLLIALLNEKDGLVVDAVLTDSDELQYAFSSTLANYHATNPRYHELARLLYELMPKRPLGTQYSCIGFHHLGKVAVMSEILAEHRKTKERLATAPGFKGTVAIAFTMPSSAYVLKIIRDHPTDDYKFDYFDGLDEVLRKYNLVHEIDRAGSMLDNIIYSNVKLDRAMFAPELLDELLEAGIGTVTLDRGALVFRHLIVQIKLTPLPLYLANASAAESRAAVINLGDCIKNNAAADIFNKDLDGRNYGVSRIRKVYLFDYDAVEPLTSVTVSRDGAAPGEFDNGMVFRPQEMLEGLRIDDPGLRRAFRDAHPELMQADYWEGMQRALRDGKVPKVMNYPASRRLQR</sequence>
<feature type="chain" id="PRO_1000133276" description="Isocitrate dehydrogenase kinase/phosphatase">
    <location>
        <begin position="1"/>
        <end position="610"/>
    </location>
</feature>
<feature type="active site" evidence="1">
    <location>
        <position position="419"/>
    </location>
</feature>
<feature type="binding site" evidence="1">
    <location>
        <begin position="359"/>
        <end position="365"/>
    </location>
    <ligand>
        <name>ATP</name>
        <dbReference type="ChEBI" id="CHEBI:30616"/>
    </ligand>
</feature>
<feature type="binding site" evidence="1">
    <location>
        <position position="380"/>
    </location>
    <ligand>
        <name>ATP</name>
        <dbReference type="ChEBI" id="CHEBI:30616"/>
    </ligand>
</feature>